<reference key="1">
    <citation type="journal article" date="1992" name="Infect. Immun.">
        <title>mxiA of Shigella flexneri 2a, which facilitates export of invasion plasmid antigens, encodes a homolog of the low-calcium-response protein, LcrD, of Yersinia pestis.</title>
        <authorList>
            <person name="Andrews G.P."/>
            <person name="Maurelli A.T."/>
        </authorList>
    </citation>
    <scope>NUCLEOTIDE SEQUENCE [GENOMIC DNA]</scope>
    <source>
        <strain>ATCC 700930 / 2457T / Serotype 2a</strain>
        <plasmid>pWR100</plasmid>
    </source>
</reference>
<reference key="2">
    <citation type="submission" date="1992-04" db="EMBL/GenBank/DDBJ databases">
        <title>A virulence locus, virH, on the large plasmid of Shigella flexneri.</title>
        <authorList>
            <person name="Sasakawa C."/>
        </authorList>
    </citation>
    <scope>NUCLEOTIDE SEQUENCE [GENOMIC DNA]</scope>
    <source>
        <strain>YSH6000 / Serotype 2a</strain>
        <plasmid>pMYSH6000</plasmid>
    </source>
</reference>
<reference key="3">
    <citation type="journal article" date="2000" name="Mol. Microbiol.">
        <title>The virulence plasmid pWR100 and the repertoire of proteins secreted by the type III secretion apparatus of Shigella flexneri.</title>
        <authorList>
            <person name="Buchrieser C."/>
            <person name="Glaser P."/>
            <person name="Rusniok C."/>
            <person name="Nedjari H."/>
            <person name="d'Hauteville H."/>
            <person name="Kunst F."/>
            <person name="Sansonetti P.J."/>
            <person name="Parsot C."/>
        </authorList>
    </citation>
    <scope>NUCLEOTIDE SEQUENCE [GENOMIC DNA]</scope>
    <source>
        <strain>M90T / Serotype 5a</strain>
        <plasmid>pWR100</plasmid>
    </source>
</reference>
<reference key="4">
    <citation type="journal article" date="2001" name="Infect. Immun.">
        <title>Complete DNA sequence and analysis of the large virulence plasmid of Shigella flexneri.</title>
        <authorList>
            <person name="Venkatesan M.M."/>
            <person name="Goldberg M.B."/>
            <person name="Rose D.J."/>
            <person name="Grotbeck E.J."/>
            <person name="Burland V."/>
            <person name="Blattner F.R."/>
        </authorList>
    </citation>
    <scope>NUCLEOTIDE SEQUENCE [GENOMIC DNA]</scope>
    <source>
        <strain>M90T / Serotype 5a</strain>
        <plasmid>pWR501</plasmid>
    </source>
</reference>
<reference key="5">
    <citation type="journal article" date="2002" name="Nucleic Acids Res.">
        <title>Genome sequence of Shigella flexneri 2a: insights into pathogenicity through comparison with genomes of Escherichia coli K12 and O157.</title>
        <authorList>
            <person name="Jin Q."/>
            <person name="Yuan Z."/>
            <person name="Xu J."/>
            <person name="Wang Y."/>
            <person name="Shen Y."/>
            <person name="Lu W."/>
            <person name="Wang J."/>
            <person name="Liu H."/>
            <person name="Yang J."/>
            <person name="Yang F."/>
            <person name="Zhang X."/>
            <person name="Zhang J."/>
            <person name="Yang G."/>
            <person name="Wu H."/>
            <person name="Qu D."/>
            <person name="Dong J."/>
            <person name="Sun L."/>
            <person name="Xue Y."/>
            <person name="Zhao A."/>
            <person name="Gao Y."/>
            <person name="Zhu J."/>
            <person name="Kan B."/>
            <person name="Ding K."/>
            <person name="Chen S."/>
            <person name="Cheng H."/>
            <person name="Yao Z."/>
            <person name="He B."/>
            <person name="Chen R."/>
            <person name="Ma D."/>
            <person name="Qiang B."/>
            <person name="Wen Y."/>
            <person name="Hou Y."/>
            <person name="Yu J."/>
        </authorList>
    </citation>
    <scope>NUCLEOTIDE SEQUENCE [LARGE SCALE GENOMIC DNA]</scope>
    <source>
        <strain>301 / Serotype 2a</strain>
        <plasmid>pCP301</plasmid>
    </source>
</reference>
<reference key="6">
    <citation type="journal article" date="1992" name="J. Bacteriol.">
        <title>Surface presentation of Shigella flexneri invasion plasmid antigens requires the products of the spa locus.</title>
        <authorList>
            <person name="Venkatesan M.M."/>
            <person name="Buysse J.M."/>
            <person name="Oaks E.V."/>
        </authorList>
    </citation>
    <scope>NUCLEOTIDE SEQUENCE [GENOMIC DNA] OF 489-686</scope>
    <source>
        <strain>M90T / Serotype 5a</strain>
        <plasmid>pWR100</plasmid>
    </source>
</reference>
<reference key="7">
    <citation type="journal article" date="1993" name="J. Bacteriol.">
        <title>Eight genes in region 5 that form an operon are essential for invasion of epithelial cells by Shigella flexneri 2a.</title>
        <authorList>
            <person name="Sasakawa C."/>
            <person name="Komatsu K."/>
            <person name="Tobe T."/>
            <person name="Suzuki T."/>
            <person name="Yoshikawa M."/>
        </authorList>
    </citation>
    <scope>NUCLEOTIDE SEQUENCE [GENOMIC DNA] OF 489-686</scope>
    <source>
        <strain>YSH6000 / Serotype 2a</strain>
        <plasmid>pMYSH6000</plasmid>
    </source>
</reference>
<accession>P0A1I5</accession>
<accession>P35533</accession>
<accession>Q55295</accession>
<gene>
    <name type="primary">mxiA</name>
    <name type="synonym">virH</name>
    <name type="ordered locus">CP0147</name>
</gene>
<keyword id="KW-0002">3D-structure</keyword>
<keyword id="KW-0997">Cell inner membrane</keyword>
<keyword id="KW-1003">Cell membrane</keyword>
<keyword id="KW-0472">Membrane</keyword>
<keyword id="KW-0614">Plasmid</keyword>
<keyword id="KW-0653">Protein transport</keyword>
<keyword id="KW-1185">Reference proteome</keyword>
<keyword id="KW-0812">Transmembrane</keyword>
<keyword id="KW-1133">Transmembrane helix</keyword>
<keyword id="KW-0813">Transport</keyword>
<keyword id="KW-0843">Virulence</keyword>
<feature type="chain" id="PRO_0000190032" description="Protein MxiA">
    <location>
        <begin position="1"/>
        <end position="686"/>
    </location>
</feature>
<feature type="transmembrane region" description="Helical" evidence="1">
    <location>
        <begin position="28"/>
        <end position="52"/>
    </location>
</feature>
<feature type="transmembrane region" description="Helical" evidence="1">
    <location>
        <begin position="105"/>
        <end position="129"/>
    </location>
</feature>
<feature type="transmembrane region" description="Helical" evidence="1">
    <location>
        <begin position="197"/>
        <end position="216"/>
    </location>
</feature>
<feature type="transmembrane region" description="Helical" evidence="1">
    <location>
        <begin position="232"/>
        <end position="256"/>
    </location>
</feature>
<feature type="transmembrane region" description="Helical" evidence="1">
    <location>
        <begin position="274"/>
        <end position="292"/>
    </location>
</feature>
<feature type="transmembrane region" description="Helical" evidence="1">
    <location>
        <begin position="299"/>
        <end position="315"/>
    </location>
</feature>
<feature type="sequence conflict" description="In Ref. 1; AAA26529." evidence="2" ref="1">
    <original>A</original>
    <variation>R</variation>
    <location>
        <position position="95"/>
    </location>
</feature>
<feature type="sequence conflict" description="In Ref. 1; AAA26529." evidence="2" ref="1">
    <original>IV</original>
    <variation>ML</variation>
    <location>
        <begin position="255"/>
        <end position="256"/>
    </location>
</feature>
<feature type="sequence conflict" description="In Ref. 1; AAA26529." evidence="2" ref="1">
    <original>S</original>
    <variation>T</variation>
    <location>
        <position position="342"/>
    </location>
</feature>
<feature type="sequence conflict" description="In Ref. 1; AAA26529." evidence="2" ref="1">
    <original>A</original>
    <variation>R</variation>
    <location>
        <position position="355"/>
    </location>
</feature>
<feature type="strand" evidence="3">
    <location>
        <begin position="362"/>
        <end position="368"/>
    </location>
</feature>
<feature type="helix" evidence="3">
    <location>
        <begin position="377"/>
        <end position="391"/>
    </location>
</feature>
<feature type="strand" evidence="3">
    <location>
        <begin position="400"/>
        <end position="406"/>
    </location>
</feature>
<feature type="strand" evidence="3">
    <location>
        <begin position="411"/>
        <end position="416"/>
    </location>
</feature>
<feature type="strand" evidence="3">
    <location>
        <begin position="419"/>
        <end position="425"/>
    </location>
</feature>
<feature type="strand" evidence="3">
    <location>
        <begin position="431"/>
        <end position="433"/>
    </location>
</feature>
<feature type="turn" evidence="3">
    <location>
        <begin position="442"/>
        <end position="444"/>
    </location>
</feature>
<feature type="strand" evidence="3">
    <location>
        <begin position="448"/>
        <end position="452"/>
    </location>
</feature>
<feature type="strand" evidence="3">
    <location>
        <begin position="455"/>
        <end position="459"/>
    </location>
</feature>
<feature type="helix" evidence="3">
    <location>
        <begin position="478"/>
        <end position="491"/>
    </location>
</feature>
<feature type="helix" evidence="3">
    <location>
        <begin position="494"/>
        <end position="496"/>
    </location>
</feature>
<feature type="helix" evidence="3">
    <location>
        <begin position="500"/>
        <end position="511"/>
    </location>
</feature>
<feature type="helix" evidence="3">
    <location>
        <begin position="515"/>
        <end position="518"/>
    </location>
</feature>
<feature type="turn" evidence="3">
    <location>
        <begin position="522"/>
        <end position="524"/>
    </location>
</feature>
<feature type="helix" evidence="3">
    <location>
        <begin position="527"/>
        <end position="538"/>
    </location>
</feature>
<feature type="turn" evidence="3">
    <location>
        <begin position="539"/>
        <end position="541"/>
    </location>
</feature>
<feature type="helix" evidence="3">
    <location>
        <begin position="547"/>
        <end position="557"/>
    </location>
</feature>
<feature type="turn" evidence="3">
    <location>
        <begin position="558"/>
        <end position="560"/>
    </location>
</feature>
<feature type="helix" evidence="3">
    <location>
        <begin position="564"/>
        <end position="574"/>
    </location>
</feature>
<feature type="helix" evidence="3">
    <location>
        <begin position="576"/>
        <end position="583"/>
    </location>
</feature>
<feature type="strand" evidence="3">
    <location>
        <begin position="591"/>
        <end position="594"/>
    </location>
</feature>
<feature type="helix" evidence="3">
    <location>
        <begin position="596"/>
        <end position="603"/>
    </location>
</feature>
<feature type="helix" evidence="3">
    <location>
        <begin position="623"/>
        <end position="637"/>
    </location>
</feature>
<feature type="strand" evidence="3">
    <location>
        <begin position="644"/>
        <end position="647"/>
    </location>
</feature>
<feature type="turn" evidence="3">
    <location>
        <begin position="649"/>
        <end position="651"/>
    </location>
</feature>
<feature type="helix" evidence="3">
    <location>
        <begin position="652"/>
        <end position="655"/>
    </location>
</feature>
<feature type="turn" evidence="3">
    <location>
        <begin position="658"/>
        <end position="662"/>
    </location>
</feature>
<feature type="strand" evidence="3">
    <location>
        <begin position="668"/>
        <end position="670"/>
    </location>
</feature>
<feature type="strand" evidence="3">
    <location>
        <begin position="684"/>
        <end position="686"/>
    </location>
</feature>
<proteinExistence type="evidence at protein level"/>
<dbReference type="EMBL" id="M91664">
    <property type="protein sequence ID" value="AAA26529.1"/>
    <property type="status" value="ALT_INIT"/>
    <property type="molecule type" value="Genomic_DNA"/>
</dbReference>
<dbReference type="EMBL" id="D10999">
    <property type="protein sequence ID" value="BAA01771.1"/>
    <property type="molecule type" value="Genomic_DNA"/>
</dbReference>
<dbReference type="EMBL" id="AL391753">
    <property type="protein sequence ID" value="CAC05822.1"/>
    <property type="molecule type" value="Genomic_DNA"/>
</dbReference>
<dbReference type="EMBL" id="AF348706">
    <property type="protein sequence ID" value="AAK18466.1"/>
    <property type="molecule type" value="Genomic_DNA"/>
</dbReference>
<dbReference type="EMBL" id="AF386526">
    <property type="protein sequence ID" value="AAL72333.1"/>
    <property type="molecule type" value="Genomic_DNA"/>
</dbReference>
<dbReference type="EMBL" id="M81458">
    <property type="status" value="NOT_ANNOTATED_CDS"/>
    <property type="molecule type" value="Genomic_DNA"/>
</dbReference>
<dbReference type="PIR" id="A44797">
    <property type="entry name" value="A44797"/>
</dbReference>
<dbReference type="RefSeq" id="NP_085310.1">
    <property type="nucleotide sequence ID" value="NC_002698.1"/>
</dbReference>
<dbReference type="RefSeq" id="NP_858280.1">
    <property type="nucleotide sequence ID" value="NC_004851.1"/>
</dbReference>
<dbReference type="RefSeq" id="WP_000616104.1">
    <property type="nucleotide sequence ID" value="NZ_WPGS01000043.1"/>
</dbReference>
<dbReference type="RefSeq" id="YP_009062504.1">
    <property type="nucleotide sequence ID" value="NC_024996.1"/>
</dbReference>
<dbReference type="PDB" id="4A5P">
    <property type="method" value="X-ray"/>
    <property type="resolution" value="3.15 A"/>
    <property type="chains" value="A/B/C=318-686"/>
</dbReference>
<dbReference type="PDBsum" id="4A5P"/>
<dbReference type="SMR" id="P0A1I5"/>
<dbReference type="PaxDb" id="198214-CP0147"/>
<dbReference type="GeneID" id="1238036"/>
<dbReference type="KEGG" id="sfl:CP0147"/>
<dbReference type="PATRIC" id="fig|198214.7.peg.5394"/>
<dbReference type="HOGENOM" id="CLU_015346_3_0_6"/>
<dbReference type="EvolutionaryTrace" id="P0A1I5"/>
<dbReference type="Proteomes" id="UP000001006">
    <property type="component" value="Plasmid pCP301"/>
</dbReference>
<dbReference type="GO" id="GO:0005886">
    <property type="term" value="C:plasma membrane"/>
    <property type="evidence" value="ECO:0007669"/>
    <property type="project" value="UniProtKB-SubCell"/>
</dbReference>
<dbReference type="GO" id="GO:0009306">
    <property type="term" value="P:protein secretion"/>
    <property type="evidence" value="ECO:0007669"/>
    <property type="project" value="InterPro"/>
</dbReference>
<dbReference type="Gene3D" id="3.40.30.60">
    <property type="entry name" value="FHIPEP family, domain 1"/>
    <property type="match status" value="1"/>
</dbReference>
<dbReference type="Gene3D" id="3.40.5.40">
    <property type="entry name" value="FHIPEP family, domain 2"/>
    <property type="match status" value="1"/>
</dbReference>
<dbReference type="Gene3D" id="1.10.8.540">
    <property type="entry name" value="FHIPEP family, domain 3"/>
    <property type="match status" value="1"/>
</dbReference>
<dbReference type="Gene3D" id="3.40.50.12790">
    <property type="entry name" value="FHIPEP family, domain 4"/>
    <property type="match status" value="1"/>
</dbReference>
<dbReference type="InterPro" id="IPR042194">
    <property type="entry name" value="FHIPEP_1"/>
</dbReference>
<dbReference type="InterPro" id="IPR042193">
    <property type="entry name" value="FHIPEP_3"/>
</dbReference>
<dbReference type="InterPro" id="IPR042196">
    <property type="entry name" value="FHIPEP_4"/>
</dbReference>
<dbReference type="InterPro" id="IPR025505">
    <property type="entry name" value="FHIPEP_CS"/>
</dbReference>
<dbReference type="InterPro" id="IPR001712">
    <property type="entry name" value="T3SS_FHIPEP"/>
</dbReference>
<dbReference type="InterPro" id="IPR006302">
    <property type="entry name" value="T3SS_HrcV"/>
</dbReference>
<dbReference type="NCBIfam" id="TIGR01399">
    <property type="entry name" value="hrcV"/>
    <property type="match status" value="1"/>
</dbReference>
<dbReference type="NCBIfam" id="NF011865">
    <property type="entry name" value="PRK15337.1"/>
    <property type="match status" value="1"/>
</dbReference>
<dbReference type="PANTHER" id="PTHR30161">
    <property type="entry name" value="FLAGELLAR EXPORT PROTEIN, MEMBRANE FLHA SUBUNIT-RELATED"/>
    <property type="match status" value="1"/>
</dbReference>
<dbReference type="PANTHER" id="PTHR30161:SF2">
    <property type="entry name" value="INVASION PROTEIN INVA"/>
    <property type="match status" value="1"/>
</dbReference>
<dbReference type="Pfam" id="PF00771">
    <property type="entry name" value="FHIPEP"/>
    <property type="match status" value="1"/>
</dbReference>
<dbReference type="PIRSF" id="PIRSF005419">
    <property type="entry name" value="FlhA"/>
    <property type="match status" value="1"/>
</dbReference>
<dbReference type="PRINTS" id="PR00949">
    <property type="entry name" value="TYPE3IMAPROT"/>
</dbReference>
<dbReference type="PROSITE" id="PS00994">
    <property type="entry name" value="FHIPEP"/>
    <property type="match status" value="1"/>
</dbReference>
<evidence type="ECO:0000255" key="1"/>
<evidence type="ECO:0000305" key="2"/>
<evidence type="ECO:0007829" key="3">
    <source>
        <dbReference type="PDB" id="4A5P"/>
    </source>
</evidence>
<sequence>MIQSFLKQVSTKPELIILVLMVMIIAMLIIPLPTYLVDFLIGLNIVLAILVFMGSFYIERILSFSTFPSVLLITTLFRLALSISTSRLILVDADAGKIITTFGQFVIGDSLAVGFVIFSIVTVVQFIVITKGSERVAEVAARFSLDGMPGKQMSIDADLKAGIIDAAGAKERRSILERESQLYGSFDGAMKFIKGDAIAGIIIIFVNLIGGISVGMSQHGMSLSGALSTYTILTIGDGLVSQIPALLISISAGFIVTRVNGDSDNMGRNIMSQIFGNPFVLIVTSALALAIGMLPGFPFFVFFLIAVTLTALFYYKKVVEKEKSLSESDSSGYTGTFDIDNSHDSSLAMIENLDAISSETVPLILLFAENKINANDMEGLIERIRSQFFIDYGVRLPTILYRTSNELKVDDIVLLINEVRADSFNIYFDKVCITDENGDIDALGIPVVSTSYNERVISWVDVSYTENLTNIDAKIKSAQDEFYHQLSQALLNNINEIFGIQETKNMLDQFENRYPDLLKEVFRHVTIQRISEVLQRLLGENISVRNLKLIMESLALWAPREKDVITLVEHVRASLSRYICSKIAVSGEIKVVMLSGYIEDAIRKGIRQTSGGSFLNMDIEVSDEVMETLAHALRELRNAKKNFVLLVSVDIRRFVKRLIDNRFKSILVISYAEIDEAYTINVLKTI</sequence>
<comment type="function">
    <text>Necessary for the secretion of IPA invasins.</text>
</comment>
<comment type="subcellular location">
    <subcellularLocation>
        <location>Cell inner membrane</location>
        <topology>Multi-pass membrane protein</topology>
    </subcellularLocation>
</comment>
<comment type="similarity">
    <text evidence="2">Belongs to the FHIPEP (flagella/HR/invasion proteins export pore) family.</text>
</comment>
<comment type="sequence caution" evidence="2">
    <conflict type="erroneous initiation">
        <sequence resource="EMBL-CDS" id="AAA26529"/>
    </conflict>
    <text>Truncated N-terminus.</text>
</comment>
<organism>
    <name type="scientific">Shigella flexneri</name>
    <dbReference type="NCBI Taxonomy" id="623"/>
    <lineage>
        <taxon>Bacteria</taxon>
        <taxon>Pseudomonadati</taxon>
        <taxon>Pseudomonadota</taxon>
        <taxon>Gammaproteobacteria</taxon>
        <taxon>Enterobacterales</taxon>
        <taxon>Enterobacteriaceae</taxon>
        <taxon>Shigella</taxon>
    </lineage>
</organism>
<name>MXIA_SHIFL</name>
<geneLocation type="plasmid">
    <name>pWR100</name>
</geneLocation>
<geneLocation type="plasmid">
    <name>pWR501</name>
</geneLocation>
<geneLocation type="plasmid">
    <name>pMYSH6000</name>
</geneLocation>
<geneLocation type="plasmid">
    <name>pCP301</name>
</geneLocation>
<protein>
    <recommendedName>
        <fullName>Protein MxiA</fullName>
    </recommendedName>
    <alternativeName>
        <fullName>Protein VirH</fullName>
    </alternativeName>
</protein>